<name>GARL_SALEP</name>
<feature type="chain" id="PRO_1000140413" description="5-keto-4-deoxy-D-glucarate aldolase">
    <location>
        <begin position="1"/>
        <end position="256"/>
    </location>
</feature>
<feature type="active site" description="Proton acceptor" evidence="1">
    <location>
        <position position="50"/>
    </location>
</feature>
<feature type="binding site" evidence="1">
    <location>
        <position position="151"/>
    </location>
    <ligand>
        <name>substrate</name>
    </ligand>
</feature>
<feature type="binding site" evidence="1">
    <location>
        <position position="153"/>
    </location>
    <ligand>
        <name>Mg(2+)</name>
        <dbReference type="ChEBI" id="CHEBI:18420"/>
    </ligand>
</feature>
<feature type="binding site" evidence="1">
    <location>
        <position position="178"/>
    </location>
    <ligand>
        <name>substrate</name>
    </ligand>
</feature>
<feature type="binding site" evidence="1">
    <location>
        <position position="179"/>
    </location>
    <ligand>
        <name>Mg(2+)</name>
        <dbReference type="ChEBI" id="CHEBI:18420"/>
    </ligand>
</feature>
<feature type="binding site" evidence="1">
    <location>
        <position position="179"/>
    </location>
    <ligand>
        <name>substrate</name>
    </ligand>
</feature>
<feature type="site" description="Transition state stabilizer" evidence="1">
    <location>
        <position position="75"/>
    </location>
</feature>
<feature type="site" description="Increases basicity of active site His" evidence="1">
    <location>
        <position position="89"/>
    </location>
</feature>
<keyword id="KW-0456">Lyase</keyword>
<keyword id="KW-0460">Magnesium</keyword>
<keyword id="KW-0479">Metal-binding</keyword>
<accession>B5QZS6</accession>
<organism>
    <name type="scientific">Salmonella enteritidis PT4 (strain P125109)</name>
    <dbReference type="NCBI Taxonomy" id="550537"/>
    <lineage>
        <taxon>Bacteria</taxon>
        <taxon>Pseudomonadati</taxon>
        <taxon>Pseudomonadota</taxon>
        <taxon>Gammaproteobacteria</taxon>
        <taxon>Enterobacterales</taxon>
        <taxon>Enterobacteriaceae</taxon>
        <taxon>Salmonella</taxon>
    </lineage>
</organism>
<protein>
    <recommendedName>
        <fullName evidence="1">5-keto-4-deoxy-D-glucarate aldolase</fullName>
        <shortName evidence="1">KDGluc aldolase</shortName>
        <shortName evidence="1">KDGlucA</shortName>
        <ecNumber evidence="1">4.1.2.20</ecNumber>
    </recommendedName>
    <alternativeName>
        <fullName evidence="1">2-dehydro-3-deoxy-D-glucarate aldolase</fullName>
    </alternativeName>
    <alternativeName>
        <fullName evidence="1">2-keto-3-deoxy-D-glucarate aldolase</fullName>
    </alternativeName>
    <alternativeName>
        <fullName evidence="1">5-dehydro-4-deoxy-D-glucarate aldolase</fullName>
    </alternativeName>
    <alternativeName>
        <fullName evidence="1">Alpha-keto-beta-deoxy-D-glucarate aldolase</fullName>
    </alternativeName>
</protein>
<gene>
    <name evidence="1" type="primary">garL</name>
    <name type="ordered locus">SEN3089</name>
</gene>
<proteinExistence type="inferred from homology"/>
<evidence type="ECO:0000255" key="1">
    <source>
        <dbReference type="HAMAP-Rule" id="MF_01291"/>
    </source>
</evidence>
<comment type="function">
    <text evidence="1">Catalyzes the reversible retro-aldol cleavage of both 5-keto-4-deoxy-D-glucarate and 2-keto-3-deoxy-D-glucarate to pyruvate and tartronic semialdehyde.</text>
</comment>
<comment type="catalytic activity">
    <reaction evidence="1">
        <text>5-dehydro-4-deoxy-D-glucarate = 2-hydroxy-3-oxopropanoate + pyruvate</text>
        <dbReference type="Rhea" id="RHEA:27726"/>
        <dbReference type="ChEBI" id="CHEBI:15361"/>
        <dbReference type="ChEBI" id="CHEBI:42819"/>
        <dbReference type="ChEBI" id="CHEBI:57978"/>
    </reaction>
</comment>
<comment type="catalytic activity">
    <reaction evidence="1">
        <text>2-dehydro-3-deoxy-D-glucarate = 2-hydroxy-3-oxopropanoate + pyruvate</text>
        <dbReference type="Rhea" id="RHEA:10268"/>
        <dbReference type="ChEBI" id="CHEBI:15361"/>
        <dbReference type="ChEBI" id="CHEBI:57978"/>
        <dbReference type="ChEBI" id="CHEBI:58098"/>
        <dbReference type="EC" id="4.1.2.20"/>
    </reaction>
</comment>
<comment type="cofactor">
    <cofactor evidence="1">
        <name>Mg(2+)</name>
        <dbReference type="ChEBI" id="CHEBI:18420"/>
    </cofactor>
    <text evidence="1">Binds 1 Mg(2+) ion per subunit.</text>
</comment>
<comment type="pathway">
    <text evidence="1">Carbohydrate acid metabolism; galactarate degradation; D-glycerate from galactarate: step 2/3.</text>
</comment>
<comment type="subunit">
    <text evidence="1">Homohexamer; trimer of dimers.</text>
</comment>
<comment type="similarity">
    <text evidence="1">Belongs to the HpcH/HpaI aldolase family. KDGluc aldolase subfamily.</text>
</comment>
<sequence>MNNAIFPNKFKAALAAQQVQIGCWSALASPITTEVLGLAGFDWLVLDGEHAPNDVTTLIPQLMALKGSASAPVVRVPTNEPVIIKRMLDIGFYNFLIPFVETQEEAARAVASTRYPPEGIRGVSVSHRANMFGTVPDYFAQSNKNITIIVQIESQLGVDNVDAIAATEGVDGIFVGPSDLAAALGHLGNASHPDVQQTIQHIFARAKAHGKPCGILAPVEADARRYLEWGATFVAVGSDLGAFRASTQKLADTFKK</sequence>
<reference key="1">
    <citation type="journal article" date="2008" name="Genome Res.">
        <title>Comparative genome analysis of Salmonella enteritidis PT4 and Salmonella gallinarum 287/91 provides insights into evolutionary and host adaptation pathways.</title>
        <authorList>
            <person name="Thomson N.R."/>
            <person name="Clayton D.J."/>
            <person name="Windhorst D."/>
            <person name="Vernikos G."/>
            <person name="Davidson S."/>
            <person name="Churcher C."/>
            <person name="Quail M.A."/>
            <person name="Stevens M."/>
            <person name="Jones M.A."/>
            <person name="Watson M."/>
            <person name="Barron A."/>
            <person name="Layton A."/>
            <person name="Pickard D."/>
            <person name="Kingsley R.A."/>
            <person name="Bignell A."/>
            <person name="Clark L."/>
            <person name="Harris B."/>
            <person name="Ormond D."/>
            <person name="Abdellah Z."/>
            <person name="Brooks K."/>
            <person name="Cherevach I."/>
            <person name="Chillingworth T."/>
            <person name="Woodward J."/>
            <person name="Norberczak H."/>
            <person name="Lord A."/>
            <person name="Arrowsmith C."/>
            <person name="Jagels K."/>
            <person name="Moule S."/>
            <person name="Mungall K."/>
            <person name="Saunders M."/>
            <person name="Whitehead S."/>
            <person name="Chabalgoity J.A."/>
            <person name="Maskell D."/>
            <person name="Humphreys T."/>
            <person name="Roberts M."/>
            <person name="Barrow P.A."/>
            <person name="Dougan G."/>
            <person name="Parkhill J."/>
        </authorList>
    </citation>
    <scope>NUCLEOTIDE SEQUENCE [LARGE SCALE GENOMIC DNA]</scope>
    <source>
        <strain>P125109</strain>
    </source>
</reference>
<dbReference type="EC" id="4.1.2.20" evidence="1"/>
<dbReference type="EMBL" id="AM933172">
    <property type="protein sequence ID" value="CAR34665.1"/>
    <property type="molecule type" value="Genomic_DNA"/>
</dbReference>
<dbReference type="RefSeq" id="WP_001057715.1">
    <property type="nucleotide sequence ID" value="NC_011294.1"/>
</dbReference>
<dbReference type="SMR" id="B5QZS6"/>
<dbReference type="KEGG" id="set:SEN3089"/>
<dbReference type="HOGENOM" id="CLU_059964_1_0_6"/>
<dbReference type="UniPathway" id="UPA00565">
    <property type="reaction ID" value="UER00630"/>
</dbReference>
<dbReference type="Proteomes" id="UP000000613">
    <property type="component" value="Chromosome"/>
</dbReference>
<dbReference type="GO" id="GO:0005737">
    <property type="term" value="C:cytoplasm"/>
    <property type="evidence" value="ECO:0007669"/>
    <property type="project" value="TreeGrafter"/>
</dbReference>
<dbReference type="GO" id="GO:0008672">
    <property type="term" value="F:2-dehydro-3-deoxyglucarate aldolase activity"/>
    <property type="evidence" value="ECO:0007669"/>
    <property type="project" value="UniProtKB-UniRule"/>
</dbReference>
<dbReference type="GO" id="GO:0000287">
    <property type="term" value="F:magnesium ion binding"/>
    <property type="evidence" value="ECO:0007669"/>
    <property type="project" value="UniProtKB-UniRule"/>
</dbReference>
<dbReference type="GO" id="GO:0042838">
    <property type="term" value="P:D-glucarate catabolic process"/>
    <property type="evidence" value="ECO:0007669"/>
    <property type="project" value="UniProtKB-UniRule"/>
</dbReference>
<dbReference type="GO" id="GO:0046392">
    <property type="term" value="P:galactarate catabolic process"/>
    <property type="evidence" value="ECO:0007669"/>
    <property type="project" value="UniProtKB-UniRule"/>
</dbReference>
<dbReference type="FunFam" id="3.20.20.60:FF:000004">
    <property type="entry name" value="5-keto-4-deoxy-D-glucarate aldolase"/>
    <property type="match status" value="1"/>
</dbReference>
<dbReference type="Gene3D" id="3.20.20.60">
    <property type="entry name" value="Phosphoenolpyruvate-binding domains"/>
    <property type="match status" value="1"/>
</dbReference>
<dbReference type="HAMAP" id="MF_01291">
    <property type="entry name" value="KDGluc_aldolase"/>
    <property type="match status" value="1"/>
</dbReference>
<dbReference type="InterPro" id="IPR005000">
    <property type="entry name" value="Aldolase/citrate-lyase_domain"/>
</dbReference>
<dbReference type="InterPro" id="IPR017648">
    <property type="entry name" value="GarL"/>
</dbReference>
<dbReference type="InterPro" id="IPR050251">
    <property type="entry name" value="HpcH-HpaI_aldolase"/>
</dbReference>
<dbReference type="InterPro" id="IPR015813">
    <property type="entry name" value="Pyrv/PenolPyrv_kinase-like_dom"/>
</dbReference>
<dbReference type="InterPro" id="IPR040442">
    <property type="entry name" value="Pyrv_kinase-like_dom_sf"/>
</dbReference>
<dbReference type="NCBIfam" id="TIGR03239">
    <property type="entry name" value="GarL"/>
    <property type="match status" value="1"/>
</dbReference>
<dbReference type="NCBIfam" id="NF007849">
    <property type="entry name" value="PRK10558.1"/>
    <property type="match status" value="1"/>
</dbReference>
<dbReference type="PANTHER" id="PTHR30502">
    <property type="entry name" value="2-KETO-3-DEOXY-L-RHAMNONATE ALDOLASE"/>
    <property type="match status" value="1"/>
</dbReference>
<dbReference type="PANTHER" id="PTHR30502:SF4">
    <property type="entry name" value="5-KETO-4-DEOXY-D-GLUCARATE ALDOLASE"/>
    <property type="match status" value="1"/>
</dbReference>
<dbReference type="Pfam" id="PF03328">
    <property type="entry name" value="HpcH_HpaI"/>
    <property type="match status" value="1"/>
</dbReference>
<dbReference type="SUPFAM" id="SSF51621">
    <property type="entry name" value="Phosphoenolpyruvate/pyruvate domain"/>
    <property type="match status" value="1"/>
</dbReference>